<dbReference type="EC" id="2.5.1.9"/>
<dbReference type="EMBL" id="AE005674">
    <property type="protein sequence ID" value="AAN43269.1"/>
    <property type="molecule type" value="Genomic_DNA"/>
</dbReference>
<dbReference type="EMBL" id="AE014073">
    <property type="protein sequence ID" value="AAP17158.1"/>
    <property type="molecule type" value="Genomic_DNA"/>
</dbReference>
<dbReference type="RefSeq" id="NP_707562.1">
    <property type="nucleotide sequence ID" value="NC_004337.2"/>
</dbReference>
<dbReference type="RefSeq" id="WP_000493947.1">
    <property type="nucleotide sequence ID" value="NZ_WPGW01000025.1"/>
</dbReference>
<dbReference type="BMRB" id="P0AFU9"/>
<dbReference type="SMR" id="P0AFU9"/>
<dbReference type="STRING" id="198214.SF1690"/>
<dbReference type="PaxDb" id="198214-SF1690"/>
<dbReference type="GeneID" id="1024885"/>
<dbReference type="GeneID" id="93775817"/>
<dbReference type="KEGG" id="sfl:SF1690"/>
<dbReference type="KEGG" id="sfx:S1822"/>
<dbReference type="PATRIC" id="fig|198214.7.peg.1999"/>
<dbReference type="HOGENOM" id="CLU_034388_0_1_6"/>
<dbReference type="UniPathway" id="UPA00275">
    <property type="reaction ID" value="UER00405"/>
</dbReference>
<dbReference type="Proteomes" id="UP000001006">
    <property type="component" value="Chromosome"/>
</dbReference>
<dbReference type="Proteomes" id="UP000002673">
    <property type="component" value="Chromosome"/>
</dbReference>
<dbReference type="GO" id="GO:0005829">
    <property type="term" value="C:cytosol"/>
    <property type="evidence" value="ECO:0007669"/>
    <property type="project" value="TreeGrafter"/>
</dbReference>
<dbReference type="GO" id="GO:0004746">
    <property type="term" value="F:riboflavin synthase activity"/>
    <property type="evidence" value="ECO:0007669"/>
    <property type="project" value="UniProtKB-EC"/>
</dbReference>
<dbReference type="GO" id="GO:0009231">
    <property type="term" value="P:riboflavin biosynthetic process"/>
    <property type="evidence" value="ECO:0007669"/>
    <property type="project" value="UniProtKB-UniPathway"/>
</dbReference>
<dbReference type="CDD" id="cd00402">
    <property type="entry name" value="Riboflavin_synthase_like"/>
    <property type="match status" value="1"/>
</dbReference>
<dbReference type="FunFam" id="2.40.30.20:FF:000003">
    <property type="entry name" value="Riboflavin synthase, alpha subunit"/>
    <property type="match status" value="1"/>
</dbReference>
<dbReference type="FunFam" id="2.40.30.20:FF:000005">
    <property type="entry name" value="Riboflavin synthase, alpha subunit"/>
    <property type="match status" value="1"/>
</dbReference>
<dbReference type="Gene3D" id="2.40.30.20">
    <property type="match status" value="2"/>
</dbReference>
<dbReference type="InterPro" id="IPR023366">
    <property type="entry name" value="ATP_synth_asu-like_sf"/>
</dbReference>
<dbReference type="InterPro" id="IPR001783">
    <property type="entry name" value="Lumazine-bd"/>
</dbReference>
<dbReference type="InterPro" id="IPR026017">
    <property type="entry name" value="Lumazine-bd_dom"/>
</dbReference>
<dbReference type="InterPro" id="IPR017938">
    <property type="entry name" value="Riboflavin_synthase-like_b-brl"/>
</dbReference>
<dbReference type="NCBIfam" id="NF006767">
    <property type="entry name" value="PRK09289.1"/>
    <property type="match status" value="1"/>
</dbReference>
<dbReference type="NCBIfam" id="NF009566">
    <property type="entry name" value="PRK13020.1"/>
    <property type="match status" value="1"/>
</dbReference>
<dbReference type="NCBIfam" id="TIGR00187">
    <property type="entry name" value="ribE"/>
    <property type="match status" value="1"/>
</dbReference>
<dbReference type="PANTHER" id="PTHR21098:SF0">
    <property type="entry name" value="RIBOFLAVIN SYNTHASE"/>
    <property type="match status" value="1"/>
</dbReference>
<dbReference type="PANTHER" id="PTHR21098">
    <property type="entry name" value="RIBOFLAVIN SYNTHASE ALPHA CHAIN"/>
    <property type="match status" value="1"/>
</dbReference>
<dbReference type="Pfam" id="PF00677">
    <property type="entry name" value="Lum_binding"/>
    <property type="match status" value="2"/>
</dbReference>
<dbReference type="PIRSF" id="PIRSF000498">
    <property type="entry name" value="Riboflavin_syn_A"/>
    <property type="match status" value="1"/>
</dbReference>
<dbReference type="SUPFAM" id="SSF63380">
    <property type="entry name" value="Riboflavin synthase domain-like"/>
    <property type="match status" value="2"/>
</dbReference>
<dbReference type="PROSITE" id="PS51177">
    <property type="entry name" value="LUMAZINE_BIND"/>
    <property type="match status" value="2"/>
</dbReference>
<name>RISA_SHIFL</name>
<comment type="function">
    <text evidence="1">Catalyzes the dismutation of two molecules of 6,7-dimethyl-8-ribityllumazine, resulting in the formation of riboflavin and 5-amino-6-(D-ribitylamino)uracil.</text>
</comment>
<comment type="catalytic activity">
    <reaction>
        <text>2 6,7-dimethyl-8-(1-D-ribityl)lumazine + H(+) = 5-amino-6-(D-ribitylamino)uracil + riboflavin</text>
        <dbReference type="Rhea" id="RHEA:20772"/>
        <dbReference type="ChEBI" id="CHEBI:15378"/>
        <dbReference type="ChEBI" id="CHEBI:15934"/>
        <dbReference type="ChEBI" id="CHEBI:57986"/>
        <dbReference type="ChEBI" id="CHEBI:58201"/>
        <dbReference type="EC" id="2.5.1.9"/>
    </reaction>
</comment>
<comment type="pathway">
    <text>Cofactor biosynthesis; riboflavin biosynthesis; riboflavin from 2-hydroxy-3-oxobutyl phosphate and 5-amino-6-(D-ribitylamino)uracil: step 2/2.</text>
</comment>
<comment type="subunit">
    <text evidence="1">Homotrimer.</text>
</comment>
<protein>
    <recommendedName>
        <fullName>Riboflavin synthase</fullName>
        <shortName>RS</shortName>
        <ecNumber>2.5.1.9</ecNumber>
    </recommendedName>
</protein>
<reference key="1">
    <citation type="journal article" date="2002" name="Nucleic Acids Res.">
        <title>Genome sequence of Shigella flexneri 2a: insights into pathogenicity through comparison with genomes of Escherichia coli K12 and O157.</title>
        <authorList>
            <person name="Jin Q."/>
            <person name="Yuan Z."/>
            <person name="Xu J."/>
            <person name="Wang Y."/>
            <person name="Shen Y."/>
            <person name="Lu W."/>
            <person name="Wang J."/>
            <person name="Liu H."/>
            <person name="Yang J."/>
            <person name="Yang F."/>
            <person name="Zhang X."/>
            <person name="Zhang J."/>
            <person name="Yang G."/>
            <person name="Wu H."/>
            <person name="Qu D."/>
            <person name="Dong J."/>
            <person name="Sun L."/>
            <person name="Xue Y."/>
            <person name="Zhao A."/>
            <person name="Gao Y."/>
            <person name="Zhu J."/>
            <person name="Kan B."/>
            <person name="Ding K."/>
            <person name="Chen S."/>
            <person name="Cheng H."/>
            <person name="Yao Z."/>
            <person name="He B."/>
            <person name="Chen R."/>
            <person name="Ma D."/>
            <person name="Qiang B."/>
            <person name="Wen Y."/>
            <person name="Hou Y."/>
            <person name="Yu J."/>
        </authorList>
    </citation>
    <scope>NUCLEOTIDE SEQUENCE [LARGE SCALE GENOMIC DNA]</scope>
    <source>
        <strain>301 / Serotype 2a</strain>
    </source>
</reference>
<reference key="2">
    <citation type="journal article" date="2003" name="Infect. Immun.">
        <title>Complete genome sequence and comparative genomics of Shigella flexneri serotype 2a strain 2457T.</title>
        <authorList>
            <person name="Wei J."/>
            <person name="Goldberg M.B."/>
            <person name="Burland V."/>
            <person name="Venkatesan M.M."/>
            <person name="Deng W."/>
            <person name="Fournier G."/>
            <person name="Mayhew G.F."/>
            <person name="Plunkett G. III"/>
            <person name="Rose D.J."/>
            <person name="Darling A."/>
            <person name="Mau B."/>
            <person name="Perna N.T."/>
            <person name="Payne S.M."/>
            <person name="Runyen-Janecky L.J."/>
            <person name="Zhou S."/>
            <person name="Schwartz D.C."/>
            <person name="Blattner F.R."/>
        </authorList>
    </citation>
    <scope>NUCLEOTIDE SEQUENCE [LARGE SCALE GENOMIC DNA]</scope>
    <source>
        <strain>ATCC 700930 / 2457T / Serotype 2a</strain>
    </source>
</reference>
<organism>
    <name type="scientific">Shigella flexneri</name>
    <dbReference type="NCBI Taxonomy" id="623"/>
    <lineage>
        <taxon>Bacteria</taxon>
        <taxon>Pseudomonadati</taxon>
        <taxon>Pseudomonadota</taxon>
        <taxon>Gammaproteobacteria</taxon>
        <taxon>Enterobacterales</taxon>
        <taxon>Enterobacteriaceae</taxon>
        <taxon>Shigella</taxon>
    </lineage>
</organism>
<sequence>MFTGIVQGTAKLVSIDEKPNFRTHVVELPDHMLDGLETGASVAHNGCCLTVTEINGNHVSFDLMKETLRITNLGDLKVGDWVNVERAAKFSDEIGGHLMSGHIMTTAEVAKILTSENNRQIWFKVQDSQLMKYILYKGFIGIDGISLTVGEVTPTRFCVHLIPETLERTTLGKKKLGARVNIEIDPQTQAVVDTVERVLAARENAMNQPGTEA</sequence>
<accession>P0AFU9</accession>
<accession>P29015</accession>
<keyword id="KW-1185">Reference proteome</keyword>
<keyword id="KW-0677">Repeat</keyword>
<keyword id="KW-0686">Riboflavin biosynthesis</keyword>
<keyword id="KW-0808">Transferase</keyword>
<feature type="chain" id="PRO_0000068172" description="Riboflavin synthase">
    <location>
        <begin position="1"/>
        <end position="213"/>
    </location>
</feature>
<feature type="repeat" description="Lumazine-binding 1">
    <location>
        <begin position="1"/>
        <end position="97"/>
    </location>
</feature>
<feature type="repeat" description="Lumazine-binding 2">
    <location>
        <begin position="98"/>
        <end position="195"/>
    </location>
</feature>
<feature type="binding site" evidence="3">
    <location>
        <begin position="4"/>
        <end position="6"/>
    </location>
    <ligand>
        <name>2,4-dihydroxypteridine</name>
        <dbReference type="ChEBI" id="CHEBI:16489"/>
        <label>1</label>
    </ligand>
</feature>
<feature type="binding site" evidence="3">
    <location>
        <begin position="48"/>
        <end position="50"/>
    </location>
    <ligand>
        <name>2,4-dihydroxypteridine</name>
        <dbReference type="ChEBI" id="CHEBI:16489"/>
        <label>2</label>
        <note>ligand shared between two trimeric partners</note>
    </ligand>
</feature>
<feature type="binding site" evidence="2">
    <location>
        <begin position="62"/>
        <end position="67"/>
    </location>
    <ligand>
        <name>2,4-dihydroxypteridine</name>
        <dbReference type="ChEBI" id="CHEBI:16489"/>
        <label>2</label>
        <note>ligand shared between two trimeric partners</note>
    </ligand>
</feature>
<feature type="binding site" evidence="3">
    <location>
        <begin position="101"/>
        <end position="103"/>
    </location>
    <ligand>
        <name>2,4-dihydroxypteridine</name>
        <dbReference type="ChEBI" id="CHEBI:16489"/>
        <label>2</label>
        <note>ligand shared between two trimeric partners</note>
    </ligand>
</feature>
<feature type="binding site" description="in other chain" evidence="3">
    <location>
        <position position="137"/>
    </location>
    <ligand>
        <name>2,4-dihydroxypteridine</name>
        <dbReference type="ChEBI" id="CHEBI:16489"/>
        <label>2</label>
        <note>ligand shared between two trimeric partners</note>
    </ligand>
</feature>
<feature type="binding site" evidence="3">
    <location>
        <begin position="146"/>
        <end position="148"/>
    </location>
    <ligand>
        <name>2,4-dihydroxypteridine</name>
        <dbReference type="ChEBI" id="CHEBI:16489"/>
        <label>1</label>
    </ligand>
</feature>
<feature type="binding site" evidence="3">
    <location>
        <begin position="160"/>
        <end position="165"/>
    </location>
    <ligand>
        <name>2,4-dihydroxypteridine</name>
        <dbReference type="ChEBI" id="CHEBI:16489"/>
        <label>1</label>
    </ligand>
</feature>
<proteinExistence type="inferred from homology"/>
<gene>
    <name type="primary">ribE</name>
    <name type="synonym">ribC</name>
    <name type="ordered locus">SF1690</name>
    <name type="ordered locus">S1822</name>
</gene>
<evidence type="ECO:0000250" key="1"/>
<evidence type="ECO:0000250" key="2">
    <source>
        <dbReference type="UniProtKB" id="P0AFU8"/>
    </source>
</evidence>
<evidence type="ECO:0000250" key="3">
    <source>
        <dbReference type="UniProtKB" id="Q2YN92"/>
    </source>
</evidence>